<proteinExistence type="inferred from homology"/>
<gene>
    <name evidence="1" type="primary">trpB</name>
    <name type="ordered locus">NMCC_0658</name>
</gene>
<comment type="function">
    <text evidence="1">The beta subunit is responsible for the synthesis of L-tryptophan from indole and L-serine.</text>
</comment>
<comment type="catalytic activity">
    <reaction evidence="1">
        <text>(1S,2R)-1-C-(indol-3-yl)glycerol 3-phosphate + L-serine = D-glyceraldehyde 3-phosphate + L-tryptophan + H2O</text>
        <dbReference type="Rhea" id="RHEA:10532"/>
        <dbReference type="ChEBI" id="CHEBI:15377"/>
        <dbReference type="ChEBI" id="CHEBI:33384"/>
        <dbReference type="ChEBI" id="CHEBI:57912"/>
        <dbReference type="ChEBI" id="CHEBI:58866"/>
        <dbReference type="ChEBI" id="CHEBI:59776"/>
        <dbReference type="EC" id="4.2.1.20"/>
    </reaction>
</comment>
<comment type="cofactor">
    <cofactor evidence="1">
        <name>pyridoxal 5'-phosphate</name>
        <dbReference type="ChEBI" id="CHEBI:597326"/>
    </cofactor>
</comment>
<comment type="pathway">
    <text evidence="1">Amino-acid biosynthesis; L-tryptophan biosynthesis; L-tryptophan from chorismate: step 5/5.</text>
</comment>
<comment type="subunit">
    <text evidence="1">Tetramer of two alpha and two beta chains.</text>
</comment>
<comment type="similarity">
    <text evidence="1">Belongs to the TrpB family.</text>
</comment>
<evidence type="ECO:0000255" key="1">
    <source>
        <dbReference type="HAMAP-Rule" id="MF_00133"/>
    </source>
</evidence>
<accession>A9M354</accession>
<organism>
    <name type="scientific">Neisseria meningitidis serogroup C (strain 053442)</name>
    <dbReference type="NCBI Taxonomy" id="374833"/>
    <lineage>
        <taxon>Bacteria</taxon>
        <taxon>Pseudomonadati</taxon>
        <taxon>Pseudomonadota</taxon>
        <taxon>Betaproteobacteria</taxon>
        <taxon>Neisseriales</taxon>
        <taxon>Neisseriaceae</taxon>
        <taxon>Neisseria</taxon>
    </lineage>
</organism>
<reference key="1">
    <citation type="journal article" date="2008" name="Genomics">
        <title>Characterization of ST-4821 complex, a unique Neisseria meningitidis clone.</title>
        <authorList>
            <person name="Peng J."/>
            <person name="Yang L."/>
            <person name="Yang F."/>
            <person name="Yang J."/>
            <person name="Yan Y."/>
            <person name="Nie H."/>
            <person name="Zhang X."/>
            <person name="Xiong Z."/>
            <person name="Jiang Y."/>
            <person name="Cheng F."/>
            <person name="Xu X."/>
            <person name="Chen S."/>
            <person name="Sun L."/>
            <person name="Li W."/>
            <person name="Shen Y."/>
            <person name="Shao Z."/>
            <person name="Liang X."/>
            <person name="Xu J."/>
            <person name="Jin Q."/>
        </authorList>
    </citation>
    <scope>NUCLEOTIDE SEQUENCE [LARGE SCALE GENOMIC DNA]</scope>
    <source>
        <strain>053442</strain>
    </source>
</reference>
<sequence>MKNYHAPDEKGFFGEHGGLYVSETLIPALQELADAYKAAKNDPEFWAEFRCDLKHYVGRPSPVYHAARLSEHLGGAQIWLKREDLNHTGAHKVNNTIGQALLAKRMGKKRVIAETGAGQHGVASATVAARFGMTCDVYMGADDIQRQMPNVFRMKLLGANVVGVESGSRTLKDAMNEAMREWVARVDDTFYIIGTAAGPAPYPEMVRDFQCVIGNEAKAQMQEAIGRQPDVAVACVGGGSNAIGLFHPYIGEENVRLVGVEAGGLGVNTPDHAAPITSGAPIGVLHGFRSYLMQDENGQVLGTHSVSAGLDYPGIGPEHSHLHDIKRVEYTVAKDDEALEAFDLLCRFEGIIPALESSHAVAWAVKNAPKMGKDQVILVNLSGRGDKDINTVAKLKGIKL</sequence>
<dbReference type="EC" id="4.2.1.20" evidence="1"/>
<dbReference type="EMBL" id="CP000381">
    <property type="protein sequence ID" value="ABX72854.1"/>
    <property type="molecule type" value="Genomic_DNA"/>
</dbReference>
<dbReference type="RefSeq" id="WP_012221427.1">
    <property type="nucleotide sequence ID" value="NC_010120.1"/>
</dbReference>
<dbReference type="SMR" id="A9M354"/>
<dbReference type="KEGG" id="nmn:NMCC_0658"/>
<dbReference type="HOGENOM" id="CLU_016734_3_1_4"/>
<dbReference type="UniPathway" id="UPA00035">
    <property type="reaction ID" value="UER00044"/>
</dbReference>
<dbReference type="Proteomes" id="UP000001177">
    <property type="component" value="Chromosome"/>
</dbReference>
<dbReference type="GO" id="GO:0005737">
    <property type="term" value="C:cytoplasm"/>
    <property type="evidence" value="ECO:0007669"/>
    <property type="project" value="TreeGrafter"/>
</dbReference>
<dbReference type="GO" id="GO:0004834">
    <property type="term" value="F:tryptophan synthase activity"/>
    <property type="evidence" value="ECO:0007669"/>
    <property type="project" value="UniProtKB-UniRule"/>
</dbReference>
<dbReference type="CDD" id="cd06446">
    <property type="entry name" value="Trp-synth_B"/>
    <property type="match status" value="1"/>
</dbReference>
<dbReference type="FunFam" id="3.40.50.1100:FF:000001">
    <property type="entry name" value="Tryptophan synthase beta chain"/>
    <property type="match status" value="1"/>
</dbReference>
<dbReference type="FunFam" id="3.40.50.1100:FF:000004">
    <property type="entry name" value="Tryptophan synthase beta chain"/>
    <property type="match status" value="1"/>
</dbReference>
<dbReference type="Gene3D" id="3.40.50.1100">
    <property type="match status" value="2"/>
</dbReference>
<dbReference type="HAMAP" id="MF_00133">
    <property type="entry name" value="Trp_synth_beta"/>
    <property type="match status" value="1"/>
</dbReference>
<dbReference type="InterPro" id="IPR006653">
    <property type="entry name" value="Trp_synth_b_CS"/>
</dbReference>
<dbReference type="InterPro" id="IPR006654">
    <property type="entry name" value="Trp_synth_beta"/>
</dbReference>
<dbReference type="InterPro" id="IPR023026">
    <property type="entry name" value="Trp_synth_beta/beta-like"/>
</dbReference>
<dbReference type="InterPro" id="IPR001926">
    <property type="entry name" value="TrpB-like_PALP"/>
</dbReference>
<dbReference type="InterPro" id="IPR036052">
    <property type="entry name" value="TrpB-like_PALP_sf"/>
</dbReference>
<dbReference type="NCBIfam" id="TIGR00263">
    <property type="entry name" value="trpB"/>
    <property type="match status" value="1"/>
</dbReference>
<dbReference type="PANTHER" id="PTHR48077:SF3">
    <property type="entry name" value="TRYPTOPHAN SYNTHASE"/>
    <property type="match status" value="1"/>
</dbReference>
<dbReference type="PANTHER" id="PTHR48077">
    <property type="entry name" value="TRYPTOPHAN SYNTHASE-RELATED"/>
    <property type="match status" value="1"/>
</dbReference>
<dbReference type="Pfam" id="PF00291">
    <property type="entry name" value="PALP"/>
    <property type="match status" value="1"/>
</dbReference>
<dbReference type="PIRSF" id="PIRSF001413">
    <property type="entry name" value="Trp_syn_beta"/>
    <property type="match status" value="1"/>
</dbReference>
<dbReference type="SUPFAM" id="SSF53686">
    <property type="entry name" value="Tryptophan synthase beta subunit-like PLP-dependent enzymes"/>
    <property type="match status" value="1"/>
</dbReference>
<dbReference type="PROSITE" id="PS00168">
    <property type="entry name" value="TRP_SYNTHASE_BETA"/>
    <property type="match status" value="1"/>
</dbReference>
<protein>
    <recommendedName>
        <fullName evidence="1">Tryptophan synthase beta chain</fullName>
        <ecNumber evidence="1">4.2.1.20</ecNumber>
    </recommendedName>
</protein>
<feature type="chain" id="PRO_1000076398" description="Tryptophan synthase beta chain">
    <location>
        <begin position="1"/>
        <end position="400"/>
    </location>
</feature>
<feature type="modified residue" description="N6-(pyridoxal phosphate)lysine" evidence="1">
    <location>
        <position position="92"/>
    </location>
</feature>
<name>TRPB_NEIM0</name>
<keyword id="KW-0028">Amino-acid biosynthesis</keyword>
<keyword id="KW-0057">Aromatic amino acid biosynthesis</keyword>
<keyword id="KW-0456">Lyase</keyword>
<keyword id="KW-0663">Pyridoxal phosphate</keyword>
<keyword id="KW-0822">Tryptophan biosynthesis</keyword>